<keyword id="KW-0004">4Fe-4S</keyword>
<keyword id="KW-0408">Iron</keyword>
<keyword id="KW-0411">Iron-sulfur</keyword>
<keyword id="KW-0456">Lyase</keyword>
<keyword id="KW-0479">Metal-binding</keyword>
<keyword id="KW-1185">Reference proteome</keyword>
<keyword id="KW-0949">S-adenosyl-L-methionine</keyword>
<keyword id="KW-0784">Thiamine biosynthesis</keyword>
<keyword id="KW-0862">Zinc</keyword>
<reference key="1">
    <citation type="journal article" date="2001" name="Proc. Natl. Acad. Sci. U.S.A.">
        <title>The complete genome of the crenarchaeon Sulfolobus solfataricus P2.</title>
        <authorList>
            <person name="She Q."/>
            <person name="Singh R.K."/>
            <person name="Confalonieri F."/>
            <person name="Zivanovic Y."/>
            <person name="Allard G."/>
            <person name="Awayez M.J."/>
            <person name="Chan-Weiher C.C.-Y."/>
            <person name="Clausen I.G."/>
            <person name="Curtis B.A."/>
            <person name="De Moors A."/>
            <person name="Erauso G."/>
            <person name="Fletcher C."/>
            <person name="Gordon P.M.K."/>
            <person name="Heikamp-de Jong I."/>
            <person name="Jeffries A.C."/>
            <person name="Kozera C.J."/>
            <person name="Medina N."/>
            <person name="Peng X."/>
            <person name="Thi-Ngoc H.P."/>
            <person name="Redder P."/>
            <person name="Schenk M.E."/>
            <person name="Theriault C."/>
            <person name="Tolstrup N."/>
            <person name="Charlebois R.L."/>
            <person name="Doolittle W.F."/>
            <person name="Duguet M."/>
            <person name="Gaasterland T."/>
            <person name="Garrett R.A."/>
            <person name="Ragan M.A."/>
            <person name="Sensen C.W."/>
            <person name="Van der Oost J."/>
        </authorList>
    </citation>
    <scope>NUCLEOTIDE SEQUENCE [LARGE SCALE GENOMIC DNA]</scope>
    <source>
        <strain>ATCC 35092 / DSM 1617 / JCM 11322 / P2</strain>
    </source>
</reference>
<protein>
    <recommendedName>
        <fullName evidence="1">Phosphomethylpyrimidine synthase 2</fullName>
        <ecNumber evidence="1">4.1.99.17</ecNumber>
    </recommendedName>
    <alternativeName>
        <fullName evidence="1">Hydroxymethylpyrimidine phosphate synthase 2</fullName>
        <shortName evidence="1">HMP-P synthase 2</shortName>
        <shortName evidence="1">HMP-phosphate synthase 2</shortName>
        <shortName evidence="1">HMPP synthase 2</shortName>
    </alternativeName>
    <alternativeName>
        <fullName evidence="1">Thiamine biosynthesis protein ThiC 2</fullName>
    </alternativeName>
</protein>
<organism>
    <name type="scientific">Saccharolobus solfataricus (strain ATCC 35092 / DSM 1617 / JCM 11322 / P2)</name>
    <name type="common">Sulfolobus solfataricus</name>
    <dbReference type="NCBI Taxonomy" id="273057"/>
    <lineage>
        <taxon>Archaea</taxon>
        <taxon>Thermoproteota</taxon>
        <taxon>Thermoprotei</taxon>
        <taxon>Sulfolobales</taxon>
        <taxon>Sulfolobaceae</taxon>
        <taxon>Saccharolobus</taxon>
    </lineage>
</organism>
<sequence>MGIIDEAKRGQITDEMRAISKLEGIPVEKVRNRISEGKIMLIRNAKYPSRKLVPIGKGLTTKVNVNIGTSSEVVDLDMELQKVKVANKWGDTLMDLSTGGDLDAIRRDIIKASDLPVGTVPVYQIFIESFKKKSGGAYFTEDELLNTVEKHLKDGVAFMTIHAGITKDLAIRALKSDRIIPIVSRGGDMIAGWMIHNNSENPYRKNWDYVLEMFKEYDAVISLGDALRPGATGDAHDEFQIGELLETARLVKSALQKGVQVMVEGPGHVPLNEIAWDVKLMKKLTGGVPYYVLGPLPIDVGAPYDHIASAIGAAISSASGVDLLCYLTPAEHLGLPTVKQVEEGAIAYRIAAHAGDVVKLGRKARKWDDEVSYYRGKLDWENMISKLIDPQRAYQVYTQFGTPKVKACTMCGGYCPMMWAMDQVRKIGSSSSL</sequence>
<feature type="chain" id="PRO_0000152875" description="Phosphomethylpyrimidine synthase 2">
    <location>
        <begin position="1"/>
        <end position="433"/>
    </location>
</feature>
<feature type="binding site" evidence="1">
    <location>
        <position position="66"/>
    </location>
    <ligand>
        <name>substrate</name>
    </ligand>
</feature>
<feature type="binding site" evidence="1">
    <location>
        <position position="94"/>
    </location>
    <ligand>
        <name>substrate</name>
    </ligand>
</feature>
<feature type="binding site" evidence="1">
    <location>
        <position position="123"/>
    </location>
    <ligand>
        <name>substrate</name>
    </ligand>
</feature>
<feature type="binding site" evidence="1">
    <location>
        <position position="162"/>
    </location>
    <ligand>
        <name>substrate</name>
    </ligand>
</feature>
<feature type="binding site" evidence="1">
    <location>
        <begin position="184"/>
        <end position="186"/>
    </location>
    <ligand>
        <name>substrate</name>
    </ligand>
</feature>
<feature type="binding site" evidence="1">
    <location>
        <begin position="225"/>
        <end position="228"/>
    </location>
    <ligand>
        <name>substrate</name>
    </ligand>
</feature>
<feature type="binding site" evidence="1">
    <location>
        <position position="264"/>
    </location>
    <ligand>
        <name>substrate</name>
    </ligand>
</feature>
<feature type="binding site" evidence="1">
    <location>
        <position position="268"/>
    </location>
    <ligand>
        <name>Zn(2+)</name>
        <dbReference type="ChEBI" id="CHEBI:29105"/>
    </ligand>
</feature>
<feature type="binding site" evidence="1">
    <location>
        <position position="291"/>
    </location>
    <ligand>
        <name>substrate</name>
    </ligand>
</feature>
<feature type="binding site" evidence="1">
    <location>
        <position position="332"/>
    </location>
    <ligand>
        <name>Zn(2+)</name>
        <dbReference type="ChEBI" id="CHEBI:29105"/>
    </ligand>
</feature>
<feature type="binding site" evidence="1">
    <location>
        <position position="408"/>
    </location>
    <ligand>
        <name>[4Fe-4S] cluster</name>
        <dbReference type="ChEBI" id="CHEBI:49883"/>
        <note>4Fe-4S-S-AdoMet</note>
    </ligand>
</feature>
<feature type="binding site" evidence="1">
    <location>
        <position position="411"/>
    </location>
    <ligand>
        <name>[4Fe-4S] cluster</name>
        <dbReference type="ChEBI" id="CHEBI:49883"/>
        <note>4Fe-4S-S-AdoMet</note>
    </ligand>
</feature>
<feature type="binding site" evidence="1">
    <location>
        <position position="415"/>
    </location>
    <ligand>
        <name>[4Fe-4S] cluster</name>
        <dbReference type="ChEBI" id="CHEBI:49883"/>
        <note>4Fe-4S-S-AdoMet</note>
    </ligand>
</feature>
<dbReference type="EC" id="4.1.99.17" evidence="1"/>
<dbReference type="EMBL" id="AE006641">
    <property type="protein sequence ID" value="AAK42135.1"/>
    <property type="molecule type" value="Genomic_DNA"/>
</dbReference>
<dbReference type="PIR" id="H90359">
    <property type="entry name" value="H90359"/>
</dbReference>
<dbReference type="SMR" id="Q97X14"/>
<dbReference type="FunCoup" id="Q97X14">
    <property type="interactions" value="122"/>
</dbReference>
<dbReference type="STRING" id="273057.SSO1941"/>
<dbReference type="PaxDb" id="273057-SSO1941"/>
<dbReference type="EnsemblBacteria" id="AAK42135">
    <property type="protein sequence ID" value="AAK42135"/>
    <property type="gene ID" value="SSO1941"/>
</dbReference>
<dbReference type="KEGG" id="sso:SSO1941"/>
<dbReference type="PATRIC" id="fig|273057.12.peg.2015"/>
<dbReference type="eggNOG" id="arCOG02741">
    <property type="taxonomic scope" value="Archaea"/>
</dbReference>
<dbReference type="HOGENOM" id="CLU_013181_2_2_2"/>
<dbReference type="InParanoid" id="Q97X14"/>
<dbReference type="PhylomeDB" id="Q97X14"/>
<dbReference type="UniPathway" id="UPA00060"/>
<dbReference type="Proteomes" id="UP000001974">
    <property type="component" value="Chromosome"/>
</dbReference>
<dbReference type="GO" id="GO:0051539">
    <property type="term" value="F:4 iron, 4 sulfur cluster binding"/>
    <property type="evidence" value="ECO:0007669"/>
    <property type="project" value="UniProtKB-KW"/>
</dbReference>
<dbReference type="GO" id="GO:0016830">
    <property type="term" value="F:carbon-carbon lyase activity"/>
    <property type="evidence" value="ECO:0007669"/>
    <property type="project" value="InterPro"/>
</dbReference>
<dbReference type="GO" id="GO:0008270">
    <property type="term" value="F:zinc ion binding"/>
    <property type="evidence" value="ECO:0007669"/>
    <property type="project" value="UniProtKB-UniRule"/>
</dbReference>
<dbReference type="GO" id="GO:0009228">
    <property type="term" value="P:thiamine biosynthetic process"/>
    <property type="evidence" value="ECO:0007669"/>
    <property type="project" value="UniProtKB-KW"/>
</dbReference>
<dbReference type="GO" id="GO:0009229">
    <property type="term" value="P:thiamine diphosphate biosynthetic process"/>
    <property type="evidence" value="ECO:0007669"/>
    <property type="project" value="UniProtKB-UniRule"/>
</dbReference>
<dbReference type="Gene3D" id="3.20.20.540">
    <property type="entry name" value="Radical SAM ThiC family, central domain"/>
    <property type="match status" value="1"/>
</dbReference>
<dbReference type="HAMAP" id="MF_00089">
    <property type="entry name" value="ThiC"/>
    <property type="match status" value="1"/>
</dbReference>
<dbReference type="InterPro" id="IPR037509">
    <property type="entry name" value="ThiC"/>
</dbReference>
<dbReference type="InterPro" id="IPR038521">
    <property type="entry name" value="ThiC/Bza_core_dom"/>
</dbReference>
<dbReference type="InterPro" id="IPR002817">
    <property type="entry name" value="ThiC/BzaA/B"/>
</dbReference>
<dbReference type="NCBIfam" id="NF009895">
    <property type="entry name" value="PRK13352.1"/>
    <property type="match status" value="1"/>
</dbReference>
<dbReference type="NCBIfam" id="TIGR00190">
    <property type="entry name" value="thiC"/>
    <property type="match status" value="1"/>
</dbReference>
<dbReference type="PANTHER" id="PTHR30557:SF1">
    <property type="entry name" value="PHOSPHOMETHYLPYRIMIDINE SYNTHASE, CHLOROPLASTIC"/>
    <property type="match status" value="1"/>
</dbReference>
<dbReference type="PANTHER" id="PTHR30557">
    <property type="entry name" value="THIAMINE BIOSYNTHESIS PROTEIN THIC"/>
    <property type="match status" value="1"/>
</dbReference>
<dbReference type="Pfam" id="PF01964">
    <property type="entry name" value="ThiC_Rad_SAM"/>
    <property type="match status" value="1"/>
</dbReference>
<dbReference type="SFLD" id="SFLDF00407">
    <property type="entry name" value="phosphomethylpyrimidine_syntha"/>
    <property type="match status" value="1"/>
</dbReference>
<dbReference type="SFLD" id="SFLDS00113">
    <property type="entry name" value="Radical_SAM_Phosphomethylpyrim"/>
    <property type="match status" value="1"/>
</dbReference>
<proteinExistence type="inferred from homology"/>
<evidence type="ECO:0000255" key="1">
    <source>
        <dbReference type="HAMAP-Rule" id="MF_00089"/>
    </source>
</evidence>
<comment type="function">
    <text evidence="1">Catalyzes the synthesis of the hydroxymethylpyrimidine phosphate (HMP-P) moiety of thiamine from aminoimidazole ribotide (AIR) in a radical S-adenosyl-L-methionine (SAM)-dependent reaction.</text>
</comment>
<comment type="catalytic activity">
    <reaction evidence="1">
        <text>5-amino-1-(5-phospho-beta-D-ribosyl)imidazole + S-adenosyl-L-methionine = 4-amino-2-methyl-5-(phosphooxymethyl)pyrimidine + CO + 5'-deoxyadenosine + formate + L-methionine + 3 H(+)</text>
        <dbReference type="Rhea" id="RHEA:24840"/>
        <dbReference type="ChEBI" id="CHEBI:15378"/>
        <dbReference type="ChEBI" id="CHEBI:15740"/>
        <dbReference type="ChEBI" id="CHEBI:17245"/>
        <dbReference type="ChEBI" id="CHEBI:17319"/>
        <dbReference type="ChEBI" id="CHEBI:57844"/>
        <dbReference type="ChEBI" id="CHEBI:58354"/>
        <dbReference type="ChEBI" id="CHEBI:59789"/>
        <dbReference type="ChEBI" id="CHEBI:137981"/>
        <dbReference type="EC" id="4.1.99.17"/>
    </reaction>
</comment>
<comment type="cofactor">
    <cofactor evidence="1">
        <name>[4Fe-4S] cluster</name>
        <dbReference type="ChEBI" id="CHEBI:49883"/>
    </cofactor>
    <text evidence="1">Binds 1 [4Fe-4S] cluster per subunit. The cluster is coordinated with 3 cysteines and an exchangeable S-adenosyl-L-methionine.</text>
</comment>
<comment type="pathway">
    <text evidence="1">Cofactor biosynthesis; thiamine diphosphate biosynthesis.</text>
</comment>
<comment type="similarity">
    <text evidence="1">Belongs to the ThiC family.</text>
</comment>
<gene>
    <name evidence="1" type="primary">thiC2</name>
    <name type="synonym">thiC-2</name>
    <name type="ordered locus">SSO1941</name>
</gene>
<name>THIC2_SACS2</name>
<accession>Q97X14</accession>